<gene>
    <name evidence="1" type="primary">ureC</name>
    <name type="ordered locus">YE0953</name>
</gene>
<keyword id="KW-0963">Cytoplasm</keyword>
<keyword id="KW-0378">Hydrolase</keyword>
<keyword id="KW-0479">Metal-binding</keyword>
<keyword id="KW-0533">Nickel</keyword>
<feature type="chain" id="PRO_1000070704" description="Urease subunit alpha">
    <location>
        <begin position="1"/>
        <end position="572"/>
    </location>
</feature>
<feature type="domain" description="Urease" evidence="1">
    <location>
        <begin position="134"/>
        <end position="572"/>
    </location>
</feature>
<feature type="active site" description="Proton donor" evidence="1">
    <location>
        <position position="325"/>
    </location>
</feature>
<feature type="binding site" evidence="1">
    <location>
        <position position="139"/>
    </location>
    <ligand>
        <name>Ni(2+)</name>
        <dbReference type="ChEBI" id="CHEBI:49786"/>
        <label>1</label>
    </ligand>
</feature>
<feature type="binding site" evidence="1">
    <location>
        <position position="141"/>
    </location>
    <ligand>
        <name>Ni(2+)</name>
        <dbReference type="ChEBI" id="CHEBI:49786"/>
        <label>1</label>
    </ligand>
</feature>
<feature type="binding site" description="via carbamate group" evidence="1">
    <location>
        <position position="222"/>
    </location>
    <ligand>
        <name>Ni(2+)</name>
        <dbReference type="ChEBI" id="CHEBI:49786"/>
        <label>1</label>
    </ligand>
</feature>
<feature type="binding site" description="via carbamate group" evidence="1">
    <location>
        <position position="222"/>
    </location>
    <ligand>
        <name>Ni(2+)</name>
        <dbReference type="ChEBI" id="CHEBI:49786"/>
        <label>2</label>
    </ligand>
</feature>
<feature type="binding site" evidence="1">
    <location>
        <position position="224"/>
    </location>
    <ligand>
        <name>substrate</name>
    </ligand>
</feature>
<feature type="binding site" evidence="1">
    <location>
        <position position="251"/>
    </location>
    <ligand>
        <name>Ni(2+)</name>
        <dbReference type="ChEBI" id="CHEBI:49786"/>
        <label>2</label>
    </ligand>
</feature>
<feature type="binding site" evidence="1">
    <location>
        <position position="277"/>
    </location>
    <ligand>
        <name>Ni(2+)</name>
        <dbReference type="ChEBI" id="CHEBI:49786"/>
        <label>2</label>
    </ligand>
</feature>
<feature type="binding site" evidence="1">
    <location>
        <position position="365"/>
    </location>
    <ligand>
        <name>Ni(2+)</name>
        <dbReference type="ChEBI" id="CHEBI:49786"/>
        <label>1</label>
    </ligand>
</feature>
<feature type="modified residue" description="N6-carboxylysine" evidence="1">
    <location>
        <position position="222"/>
    </location>
</feature>
<organism>
    <name type="scientific">Yersinia enterocolitica serotype O:8 / biotype 1B (strain NCTC 13174 / 8081)</name>
    <dbReference type="NCBI Taxonomy" id="393305"/>
    <lineage>
        <taxon>Bacteria</taxon>
        <taxon>Pseudomonadati</taxon>
        <taxon>Pseudomonadota</taxon>
        <taxon>Gammaproteobacteria</taxon>
        <taxon>Enterobacterales</taxon>
        <taxon>Yersiniaceae</taxon>
        <taxon>Yersinia</taxon>
    </lineage>
</organism>
<dbReference type="EC" id="3.5.1.5" evidence="1"/>
<dbReference type="EMBL" id="AM286415">
    <property type="protein sequence ID" value="CAL11051.1"/>
    <property type="molecule type" value="Genomic_DNA"/>
</dbReference>
<dbReference type="RefSeq" id="WP_011815716.1">
    <property type="nucleotide sequence ID" value="NC_008800.1"/>
</dbReference>
<dbReference type="RefSeq" id="YP_001005287.1">
    <property type="nucleotide sequence ID" value="NC_008800.1"/>
</dbReference>
<dbReference type="SMR" id="A1JKD9"/>
<dbReference type="MEROPS" id="M38.982"/>
<dbReference type="KEGG" id="yen:YE0953"/>
<dbReference type="PATRIC" id="fig|393305.7.peg.1054"/>
<dbReference type="eggNOG" id="COG0804">
    <property type="taxonomic scope" value="Bacteria"/>
</dbReference>
<dbReference type="HOGENOM" id="CLU_000980_0_0_6"/>
<dbReference type="OrthoDB" id="9802793at2"/>
<dbReference type="UniPathway" id="UPA00258">
    <property type="reaction ID" value="UER00370"/>
</dbReference>
<dbReference type="Proteomes" id="UP000000642">
    <property type="component" value="Chromosome"/>
</dbReference>
<dbReference type="GO" id="GO:0005737">
    <property type="term" value="C:cytoplasm"/>
    <property type="evidence" value="ECO:0007669"/>
    <property type="project" value="UniProtKB-SubCell"/>
</dbReference>
<dbReference type="GO" id="GO:0016151">
    <property type="term" value="F:nickel cation binding"/>
    <property type="evidence" value="ECO:0007669"/>
    <property type="project" value="UniProtKB-UniRule"/>
</dbReference>
<dbReference type="GO" id="GO:0009039">
    <property type="term" value="F:urease activity"/>
    <property type="evidence" value="ECO:0007669"/>
    <property type="project" value="UniProtKB-UniRule"/>
</dbReference>
<dbReference type="GO" id="GO:0043419">
    <property type="term" value="P:urea catabolic process"/>
    <property type="evidence" value="ECO:0007669"/>
    <property type="project" value="UniProtKB-UniRule"/>
</dbReference>
<dbReference type="CDD" id="cd00375">
    <property type="entry name" value="Urease_alpha"/>
    <property type="match status" value="1"/>
</dbReference>
<dbReference type="Gene3D" id="3.20.20.140">
    <property type="entry name" value="Metal-dependent hydrolases"/>
    <property type="match status" value="1"/>
</dbReference>
<dbReference type="Gene3D" id="2.30.40.10">
    <property type="entry name" value="Urease, subunit C, domain 1"/>
    <property type="match status" value="1"/>
</dbReference>
<dbReference type="HAMAP" id="MF_01953">
    <property type="entry name" value="Urease_alpha"/>
    <property type="match status" value="1"/>
</dbReference>
<dbReference type="InterPro" id="IPR006680">
    <property type="entry name" value="Amidohydro-rel"/>
</dbReference>
<dbReference type="InterPro" id="IPR011059">
    <property type="entry name" value="Metal-dep_hydrolase_composite"/>
</dbReference>
<dbReference type="InterPro" id="IPR032466">
    <property type="entry name" value="Metal_Hydrolase"/>
</dbReference>
<dbReference type="InterPro" id="IPR011612">
    <property type="entry name" value="Urease_alpha_N_dom"/>
</dbReference>
<dbReference type="InterPro" id="IPR050112">
    <property type="entry name" value="Urease_alpha_subunit"/>
</dbReference>
<dbReference type="InterPro" id="IPR017950">
    <property type="entry name" value="Urease_AS"/>
</dbReference>
<dbReference type="InterPro" id="IPR005848">
    <property type="entry name" value="Urease_asu"/>
</dbReference>
<dbReference type="InterPro" id="IPR017951">
    <property type="entry name" value="Urease_asu_c"/>
</dbReference>
<dbReference type="InterPro" id="IPR029754">
    <property type="entry name" value="Urease_Ni-bd"/>
</dbReference>
<dbReference type="NCBIfam" id="NF009686">
    <property type="entry name" value="PRK13207.1"/>
    <property type="match status" value="1"/>
</dbReference>
<dbReference type="NCBIfam" id="NF009834">
    <property type="entry name" value="PRK13309.1"/>
    <property type="match status" value="1"/>
</dbReference>
<dbReference type="NCBIfam" id="TIGR01792">
    <property type="entry name" value="urease_alph"/>
    <property type="match status" value="1"/>
</dbReference>
<dbReference type="PANTHER" id="PTHR43440">
    <property type="entry name" value="UREASE"/>
    <property type="match status" value="1"/>
</dbReference>
<dbReference type="PANTHER" id="PTHR43440:SF1">
    <property type="entry name" value="UREASE"/>
    <property type="match status" value="1"/>
</dbReference>
<dbReference type="Pfam" id="PF01979">
    <property type="entry name" value="Amidohydro_1"/>
    <property type="match status" value="1"/>
</dbReference>
<dbReference type="Pfam" id="PF00449">
    <property type="entry name" value="Urease_alpha"/>
    <property type="match status" value="1"/>
</dbReference>
<dbReference type="PRINTS" id="PR01752">
    <property type="entry name" value="UREASE"/>
</dbReference>
<dbReference type="SUPFAM" id="SSF51338">
    <property type="entry name" value="Composite domain of metallo-dependent hydrolases"/>
    <property type="match status" value="2"/>
</dbReference>
<dbReference type="SUPFAM" id="SSF51556">
    <property type="entry name" value="Metallo-dependent hydrolases"/>
    <property type="match status" value="1"/>
</dbReference>
<dbReference type="PROSITE" id="PS01120">
    <property type="entry name" value="UREASE_1"/>
    <property type="match status" value="1"/>
</dbReference>
<dbReference type="PROSITE" id="PS00145">
    <property type="entry name" value="UREASE_2"/>
    <property type="match status" value="1"/>
</dbReference>
<dbReference type="PROSITE" id="PS51368">
    <property type="entry name" value="UREASE_3"/>
    <property type="match status" value="1"/>
</dbReference>
<comment type="catalytic activity">
    <reaction evidence="1">
        <text>urea + 2 H2O + H(+) = hydrogencarbonate + 2 NH4(+)</text>
        <dbReference type="Rhea" id="RHEA:20557"/>
        <dbReference type="ChEBI" id="CHEBI:15377"/>
        <dbReference type="ChEBI" id="CHEBI:15378"/>
        <dbReference type="ChEBI" id="CHEBI:16199"/>
        <dbReference type="ChEBI" id="CHEBI:17544"/>
        <dbReference type="ChEBI" id="CHEBI:28938"/>
        <dbReference type="EC" id="3.5.1.5"/>
    </reaction>
</comment>
<comment type="cofactor">
    <cofactor evidence="1">
        <name>Ni cation</name>
        <dbReference type="ChEBI" id="CHEBI:25516"/>
    </cofactor>
    <text evidence="1">Binds 2 nickel ions per subunit.</text>
</comment>
<comment type="pathway">
    <text evidence="1">Nitrogen metabolism; urea degradation; CO(2) and NH(3) from urea (urease route): step 1/1.</text>
</comment>
<comment type="subunit">
    <text evidence="1">Heterotrimer of UreA (gamma), UreB (beta) and UreC (alpha) subunits. Three heterotrimers associate to form the active enzyme.</text>
</comment>
<comment type="subcellular location">
    <subcellularLocation>
        <location evidence="1">Cytoplasm</location>
    </subcellularLocation>
</comment>
<comment type="PTM">
    <text evidence="1">Carboxylation allows a single lysine to coordinate two nickel ions.</text>
</comment>
<comment type="similarity">
    <text evidence="1">Belongs to the metallo-dependent hydrolases superfamily. Urease alpha subunit family.</text>
</comment>
<protein>
    <recommendedName>
        <fullName evidence="1">Urease subunit alpha</fullName>
        <ecNumber evidence="1">3.5.1.5</ecNumber>
    </recommendedName>
    <alternativeName>
        <fullName evidence="1">Urea amidohydrolase subunit alpha</fullName>
    </alternativeName>
</protein>
<proteinExistence type="inferred from homology"/>
<sequence length="572" mass="61083">MPQISRQEYAGLFGPTTGDKIRLGDTNLFIEIEKDLRGYGEESVYGGGKSLRDGMGANNHLTRDNGVLDLVITNVTIVDARLGVIKADVGIRDGKIAGIGKSGNPGVMDGVTPGMVVGVSTDAISGEHLILTAAGIDSHIHLISPQQAYHALSNGVATFFGGGIGPTDGTNGTTVTPGPWNIRQMLRSVEGLPVNVGILGKGNSYGRGPLLEQAIAGVVGYKVHEDWGATANALRHSLRMADEMDIQVSVHTDSLNECGYVEDTIDAFEGRTIHTFHTEGAGGGHAPDIIRVASQPNVLPSSTNPTLPYGVNSQAELFDMIMVCHNLNPNVPADVSFAESRVRPETIAAENVLHDMGVISMFSSDSQAMGRVGENWLRVMQTANAMKASRGKLPEDAPGNDNFRVLRYVAKITINPAIAQGVSHVIGSVEVGKMADLVLWDPRFFGAKPKMVIKGGMINWAAMGDPNASLPTPQPVFYRPMFGAMGKTMQDTCVTFVSQAALDDGVKEKAGLDRQVIAVKNCRTISKHDLVRNDQTPNIEVDPETFAVKVDGVHATCEPIDTAAMNQRYFFG</sequence>
<accession>A1JKD9</accession>
<name>URE1_YERE8</name>
<evidence type="ECO:0000255" key="1">
    <source>
        <dbReference type="HAMAP-Rule" id="MF_01953"/>
    </source>
</evidence>
<reference key="1">
    <citation type="journal article" date="2006" name="PLoS Genet.">
        <title>The complete genome sequence and comparative genome analysis of the high pathogenicity Yersinia enterocolitica strain 8081.</title>
        <authorList>
            <person name="Thomson N.R."/>
            <person name="Howard S."/>
            <person name="Wren B.W."/>
            <person name="Holden M.T.G."/>
            <person name="Crossman L."/>
            <person name="Challis G.L."/>
            <person name="Churcher C."/>
            <person name="Mungall K."/>
            <person name="Brooks K."/>
            <person name="Chillingworth T."/>
            <person name="Feltwell T."/>
            <person name="Abdellah Z."/>
            <person name="Hauser H."/>
            <person name="Jagels K."/>
            <person name="Maddison M."/>
            <person name="Moule S."/>
            <person name="Sanders M."/>
            <person name="Whitehead S."/>
            <person name="Quail M.A."/>
            <person name="Dougan G."/>
            <person name="Parkhill J."/>
            <person name="Prentice M.B."/>
        </authorList>
    </citation>
    <scope>NUCLEOTIDE SEQUENCE [LARGE SCALE GENOMIC DNA]</scope>
    <source>
        <strain>NCTC 13174 / 8081</strain>
    </source>
</reference>